<dbReference type="EMBL" id="CR382122">
    <property type="protein sequence ID" value="CAH02337.1"/>
    <property type="molecule type" value="Genomic_DNA"/>
</dbReference>
<dbReference type="RefSeq" id="XP_451944.1">
    <property type="nucleotide sequence ID" value="XM_451944.1"/>
</dbReference>
<dbReference type="SMR" id="Q6CVU5"/>
<dbReference type="FunCoup" id="Q6CVU5">
    <property type="interactions" value="218"/>
</dbReference>
<dbReference type="STRING" id="284590.Q6CVU5"/>
<dbReference type="PaxDb" id="284590-Q6CVU5"/>
<dbReference type="KEGG" id="kla:KLLA0_B09350g"/>
<dbReference type="eggNOG" id="ENOG502QW0Y">
    <property type="taxonomic scope" value="Eukaryota"/>
</dbReference>
<dbReference type="HOGENOM" id="CLU_021764_0_0_1"/>
<dbReference type="InParanoid" id="Q6CVU5"/>
<dbReference type="OMA" id="NDKFGIY"/>
<dbReference type="Proteomes" id="UP000000598">
    <property type="component" value="Chromosome B"/>
</dbReference>
<dbReference type="GO" id="GO:0016592">
    <property type="term" value="C:mediator complex"/>
    <property type="evidence" value="ECO:0007669"/>
    <property type="project" value="InterPro"/>
</dbReference>
<dbReference type="GO" id="GO:0003712">
    <property type="term" value="F:transcription coregulator activity"/>
    <property type="evidence" value="ECO:0007669"/>
    <property type="project" value="InterPro"/>
</dbReference>
<dbReference type="GO" id="GO:0045944">
    <property type="term" value="P:positive regulation of transcription by RNA polymerase II"/>
    <property type="evidence" value="ECO:0007669"/>
    <property type="project" value="UniProtKB-ARBA"/>
</dbReference>
<dbReference type="InterPro" id="IPR019680">
    <property type="entry name" value="Mediator_Med1"/>
</dbReference>
<dbReference type="Pfam" id="PF10744">
    <property type="entry name" value="Med1"/>
    <property type="match status" value="1"/>
</dbReference>
<evidence type="ECO:0000250" key="1"/>
<evidence type="ECO:0000256" key="2">
    <source>
        <dbReference type="SAM" id="MobiDB-lite"/>
    </source>
</evidence>
<evidence type="ECO:0000305" key="3"/>
<sequence length="426" mass="49159">MSDAFVELLDEMIERLLNYKPGSRTLPNVIKLCQTLGLESFVDQVDSTKSRLSIASNIVVIDIDYENEMETILDVKLVLASNFDKFNYFNEKGENILLTSLSDVQDLKAFHHNLNFLVFLDSFSNIDIESGHTSLDLFKYYTDLPKMLQDYISDQHLPFTVKMNENSTFGVSIYDAQGQTKIMTVDLEKAPNSDRSFYEYVYDSKLKDWLNESSDASTQGINLVFKFEELVAFPETWLTTEIQMNETPKKFELPQQSHLKHTVKLQNELTSDLLLMDSFRISNEDIALLPDFLKWYNWHKIVLQEVLKLIIHDNVTSSISTSNSGSVQPKPRRKSSVLSNRRPSMTDSMMLRDSGIPEFTLKEILDQPVISDTEDDDQMDVDKEKQIPIVLNEEYIYIGKAQTCSYNDNDEQAWKAFIDYLKSKLI</sequence>
<name>MED1_KLULA</name>
<comment type="function">
    <text evidence="1">Component of the Mediator complex, a coactivator involved in the regulated transcription of nearly all RNA polymerase II-dependent genes. Mediator functions as a bridge to convey information from gene-specific regulatory proteins to the basal RNA polymerase II transcription machinery. Mediator is recruited to promoters by direct interactions with regulatory proteins and serves as a scaffold for the assembly of a functional preinitiation complex with RNA polymerase II and the general transcription factors (By similarity).</text>
</comment>
<comment type="subunit">
    <text evidence="1">Component of the Mediator complex.</text>
</comment>
<comment type="subcellular location">
    <subcellularLocation>
        <location evidence="1">Nucleus</location>
    </subcellularLocation>
</comment>
<comment type="similarity">
    <text evidence="3">Belongs to the Mediator complex subunit 1 family.</text>
</comment>
<organism>
    <name type="scientific">Kluyveromyces lactis (strain ATCC 8585 / CBS 2359 / DSM 70799 / NBRC 1267 / NRRL Y-1140 / WM37)</name>
    <name type="common">Yeast</name>
    <name type="synonym">Candida sphaerica</name>
    <dbReference type="NCBI Taxonomy" id="284590"/>
    <lineage>
        <taxon>Eukaryota</taxon>
        <taxon>Fungi</taxon>
        <taxon>Dikarya</taxon>
        <taxon>Ascomycota</taxon>
        <taxon>Saccharomycotina</taxon>
        <taxon>Saccharomycetes</taxon>
        <taxon>Saccharomycetales</taxon>
        <taxon>Saccharomycetaceae</taxon>
        <taxon>Kluyveromyces</taxon>
    </lineage>
</organism>
<feature type="chain" id="PRO_0000302030" description="Mediator of RNA polymerase II transcription subunit 1">
    <location>
        <begin position="1"/>
        <end position="426"/>
    </location>
</feature>
<feature type="region of interest" description="Disordered" evidence="2">
    <location>
        <begin position="319"/>
        <end position="349"/>
    </location>
</feature>
<feature type="compositionally biased region" description="Polar residues" evidence="2">
    <location>
        <begin position="336"/>
        <end position="347"/>
    </location>
</feature>
<gene>
    <name type="primary">MED1</name>
    <name type="ordered locus">KLLA0B09350g</name>
</gene>
<reference key="1">
    <citation type="journal article" date="2004" name="Nature">
        <title>Genome evolution in yeasts.</title>
        <authorList>
            <person name="Dujon B."/>
            <person name="Sherman D."/>
            <person name="Fischer G."/>
            <person name="Durrens P."/>
            <person name="Casaregola S."/>
            <person name="Lafontaine I."/>
            <person name="de Montigny J."/>
            <person name="Marck C."/>
            <person name="Neuveglise C."/>
            <person name="Talla E."/>
            <person name="Goffard N."/>
            <person name="Frangeul L."/>
            <person name="Aigle M."/>
            <person name="Anthouard V."/>
            <person name="Babour A."/>
            <person name="Barbe V."/>
            <person name="Barnay S."/>
            <person name="Blanchin S."/>
            <person name="Beckerich J.-M."/>
            <person name="Beyne E."/>
            <person name="Bleykasten C."/>
            <person name="Boisrame A."/>
            <person name="Boyer J."/>
            <person name="Cattolico L."/>
            <person name="Confanioleri F."/>
            <person name="de Daruvar A."/>
            <person name="Despons L."/>
            <person name="Fabre E."/>
            <person name="Fairhead C."/>
            <person name="Ferry-Dumazet H."/>
            <person name="Groppi A."/>
            <person name="Hantraye F."/>
            <person name="Hennequin C."/>
            <person name="Jauniaux N."/>
            <person name="Joyet P."/>
            <person name="Kachouri R."/>
            <person name="Kerrest A."/>
            <person name="Koszul R."/>
            <person name="Lemaire M."/>
            <person name="Lesur I."/>
            <person name="Ma L."/>
            <person name="Muller H."/>
            <person name="Nicaud J.-M."/>
            <person name="Nikolski M."/>
            <person name="Oztas S."/>
            <person name="Ozier-Kalogeropoulos O."/>
            <person name="Pellenz S."/>
            <person name="Potier S."/>
            <person name="Richard G.-F."/>
            <person name="Straub M.-L."/>
            <person name="Suleau A."/>
            <person name="Swennen D."/>
            <person name="Tekaia F."/>
            <person name="Wesolowski-Louvel M."/>
            <person name="Westhof E."/>
            <person name="Wirth B."/>
            <person name="Zeniou-Meyer M."/>
            <person name="Zivanovic Y."/>
            <person name="Bolotin-Fukuhara M."/>
            <person name="Thierry A."/>
            <person name="Bouchier C."/>
            <person name="Caudron B."/>
            <person name="Scarpelli C."/>
            <person name="Gaillardin C."/>
            <person name="Weissenbach J."/>
            <person name="Wincker P."/>
            <person name="Souciet J.-L."/>
        </authorList>
    </citation>
    <scope>NUCLEOTIDE SEQUENCE [LARGE SCALE GENOMIC DNA]</scope>
    <source>
        <strain>ATCC 8585 / CBS 2359 / DSM 70799 / NBRC 1267 / NRRL Y-1140 / WM37</strain>
    </source>
</reference>
<keyword id="KW-0010">Activator</keyword>
<keyword id="KW-0539">Nucleus</keyword>
<keyword id="KW-1185">Reference proteome</keyword>
<keyword id="KW-0804">Transcription</keyword>
<keyword id="KW-0805">Transcription regulation</keyword>
<protein>
    <recommendedName>
        <fullName>Mediator of RNA polymerase II transcription subunit 1</fullName>
    </recommendedName>
    <alternativeName>
        <fullName>Mediator complex subunit 1</fullName>
    </alternativeName>
</protein>
<accession>Q6CVU5</accession>
<proteinExistence type="inferred from homology"/>